<feature type="chain" id="PRO_1000125863" description="Ion-translocating oxidoreductase complex subunit E">
    <location>
        <begin position="1"/>
        <end position="230"/>
    </location>
</feature>
<feature type="transmembrane region" description="Helical" evidence="1">
    <location>
        <begin position="18"/>
        <end position="38"/>
    </location>
</feature>
<feature type="transmembrane region" description="Helical" evidence="1">
    <location>
        <begin position="39"/>
        <end position="59"/>
    </location>
</feature>
<feature type="transmembrane region" description="Helical" evidence="1">
    <location>
        <begin position="63"/>
        <end position="83"/>
    </location>
</feature>
<feature type="transmembrane region" description="Helical" evidence="1">
    <location>
        <begin position="86"/>
        <end position="106"/>
    </location>
</feature>
<feature type="transmembrane region" description="Helical" evidence="1">
    <location>
        <begin position="125"/>
        <end position="145"/>
    </location>
</feature>
<feature type="transmembrane region" description="Helical" evidence="1">
    <location>
        <begin position="182"/>
        <end position="202"/>
    </location>
</feature>
<organism>
    <name type="scientific">Salmonella newport (strain SL254)</name>
    <dbReference type="NCBI Taxonomy" id="423368"/>
    <lineage>
        <taxon>Bacteria</taxon>
        <taxon>Pseudomonadati</taxon>
        <taxon>Pseudomonadota</taxon>
        <taxon>Gammaproteobacteria</taxon>
        <taxon>Enterobacterales</taxon>
        <taxon>Enterobacteriaceae</taxon>
        <taxon>Salmonella</taxon>
    </lineage>
</organism>
<gene>
    <name evidence="1" type="primary">rsxE</name>
    <name type="ordered locus">SNSL254_A1564</name>
</gene>
<protein>
    <recommendedName>
        <fullName evidence="1">Ion-translocating oxidoreductase complex subunit E</fullName>
        <ecNumber evidence="1">7.-.-.-</ecNumber>
    </recommendedName>
    <alternativeName>
        <fullName evidence="1">Rsx electron transport complex subunit E</fullName>
    </alternativeName>
</protein>
<accession>B4T591</accession>
<comment type="function">
    <text evidence="1">Part of a membrane-bound complex that couples electron transfer with translocation of ions across the membrane. Required to maintain the reduced state of SoxR.</text>
</comment>
<comment type="subunit">
    <text evidence="1">The complex is composed of six subunits: RsxA, RsxB, RsxC, RsxD, RsxE and RsxG.</text>
</comment>
<comment type="subcellular location">
    <subcellularLocation>
        <location evidence="1">Cell inner membrane</location>
        <topology evidence="1">Multi-pass membrane protein</topology>
    </subcellularLocation>
</comment>
<comment type="similarity">
    <text evidence="1">Belongs to the NqrDE/RnfAE family.</text>
</comment>
<sequence>MSEIKDIVVQGLWKNNSALVQLLGLCPLLAVTSTATNALGLGLATTLVLTLTNLTVSALRRWTPAEIRIPIYVMIIASVVSAVQMLINAYAFGLYQSLGIFIPLIVTNCIVVGRAEAFAAKKGPWLSALDGFSIGMGATGAMFVLGSLREILGNGTLFDGADSLLGSWAKVLRVEIFHTDSPFLLAMLPPGAFIGLGLMLAVKYLIDEKMKKRRAETAPSAVPAGETGKV</sequence>
<proteinExistence type="inferred from homology"/>
<evidence type="ECO:0000255" key="1">
    <source>
        <dbReference type="HAMAP-Rule" id="MF_00478"/>
    </source>
</evidence>
<dbReference type="EC" id="7.-.-.-" evidence="1"/>
<dbReference type="EMBL" id="CP001113">
    <property type="protein sequence ID" value="ACF64325.1"/>
    <property type="molecule type" value="Genomic_DNA"/>
</dbReference>
<dbReference type="RefSeq" id="WP_001289630.1">
    <property type="nucleotide sequence ID" value="NZ_CCMR01000003.1"/>
</dbReference>
<dbReference type="SMR" id="B4T591"/>
<dbReference type="KEGG" id="see:SNSL254_A1564"/>
<dbReference type="HOGENOM" id="CLU_046659_1_0_6"/>
<dbReference type="Proteomes" id="UP000008824">
    <property type="component" value="Chromosome"/>
</dbReference>
<dbReference type="GO" id="GO:0005886">
    <property type="term" value="C:plasma membrane"/>
    <property type="evidence" value="ECO:0007669"/>
    <property type="project" value="UniProtKB-SubCell"/>
</dbReference>
<dbReference type="GO" id="GO:0022900">
    <property type="term" value="P:electron transport chain"/>
    <property type="evidence" value="ECO:0007669"/>
    <property type="project" value="UniProtKB-UniRule"/>
</dbReference>
<dbReference type="HAMAP" id="MF_00478">
    <property type="entry name" value="RsxE_RnfE"/>
    <property type="match status" value="1"/>
</dbReference>
<dbReference type="InterPro" id="IPR003667">
    <property type="entry name" value="NqrDE/RnfAE"/>
</dbReference>
<dbReference type="InterPro" id="IPR010968">
    <property type="entry name" value="RnfE"/>
</dbReference>
<dbReference type="NCBIfam" id="NF009070">
    <property type="entry name" value="PRK12405.1"/>
    <property type="match status" value="1"/>
</dbReference>
<dbReference type="NCBIfam" id="TIGR01948">
    <property type="entry name" value="rnfE"/>
    <property type="match status" value="1"/>
</dbReference>
<dbReference type="PANTHER" id="PTHR30586">
    <property type="entry name" value="ELECTRON TRANSPORT COMPLEX PROTEIN RNFE"/>
    <property type="match status" value="1"/>
</dbReference>
<dbReference type="PANTHER" id="PTHR30586:SF0">
    <property type="entry name" value="ION-TRANSLOCATING OXIDOREDUCTASE COMPLEX SUBUNIT E"/>
    <property type="match status" value="1"/>
</dbReference>
<dbReference type="Pfam" id="PF02508">
    <property type="entry name" value="Rnf-Nqr"/>
    <property type="match status" value="1"/>
</dbReference>
<dbReference type="PIRSF" id="PIRSF006102">
    <property type="entry name" value="NQR_DE"/>
    <property type="match status" value="1"/>
</dbReference>
<name>RSXE_SALNS</name>
<keyword id="KW-0997">Cell inner membrane</keyword>
<keyword id="KW-1003">Cell membrane</keyword>
<keyword id="KW-0249">Electron transport</keyword>
<keyword id="KW-0472">Membrane</keyword>
<keyword id="KW-1278">Translocase</keyword>
<keyword id="KW-0812">Transmembrane</keyword>
<keyword id="KW-1133">Transmembrane helix</keyword>
<keyword id="KW-0813">Transport</keyword>
<reference key="1">
    <citation type="journal article" date="2011" name="J. Bacteriol.">
        <title>Comparative genomics of 28 Salmonella enterica isolates: evidence for CRISPR-mediated adaptive sublineage evolution.</title>
        <authorList>
            <person name="Fricke W.F."/>
            <person name="Mammel M.K."/>
            <person name="McDermott P.F."/>
            <person name="Tartera C."/>
            <person name="White D.G."/>
            <person name="Leclerc J.E."/>
            <person name="Ravel J."/>
            <person name="Cebula T.A."/>
        </authorList>
    </citation>
    <scope>NUCLEOTIDE SEQUENCE [LARGE SCALE GENOMIC DNA]</scope>
    <source>
        <strain>SL254</strain>
    </source>
</reference>